<feature type="chain" id="PRO_1000187934" description="Ribonuclease Z">
    <location>
        <begin position="1"/>
        <end position="307"/>
    </location>
</feature>
<feature type="active site" description="Proton acceptor" evidence="1">
    <location>
        <position position="67"/>
    </location>
</feature>
<feature type="binding site" evidence="1">
    <location>
        <position position="63"/>
    </location>
    <ligand>
        <name>Zn(2+)</name>
        <dbReference type="ChEBI" id="CHEBI:29105"/>
        <label>1</label>
        <note>catalytic</note>
    </ligand>
</feature>
<feature type="binding site" evidence="1">
    <location>
        <position position="65"/>
    </location>
    <ligand>
        <name>Zn(2+)</name>
        <dbReference type="ChEBI" id="CHEBI:29105"/>
        <label>1</label>
        <note>catalytic</note>
    </ligand>
</feature>
<feature type="binding site" evidence="1">
    <location>
        <position position="67"/>
    </location>
    <ligand>
        <name>Zn(2+)</name>
        <dbReference type="ChEBI" id="CHEBI:29105"/>
        <label>2</label>
        <note>catalytic</note>
    </ligand>
</feature>
<feature type="binding site" evidence="1">
    <location>
        <position position="68"/>
    </location>
    <ligand>
        <name>Zn(2+)</name>
        <dbReference type="ChEBI" id="CHEBI:29105"/>
        <label>2</label>
        <note>catalytic</note>
    </ligand>
</feature>
<feature type="binding site" evidence="1">
    <location>
        <position position="141"/>
    </location>
    <ligand>
        <name>Zn(2+)</name>
        <dbReference type="ChEBI" id="CHEBI:29105"/>
        <label>1</label>
        <note>catalytic</note>
    </ligand>
</feature>
<feature type="binding site" evidence="1">
    <location>
        <position position="212"/>
    </location>
    <ligand>
        <name>Zn(2+)</name>
        <dbReference type="ChEBI" id="CHEBI:29105"/>
        <label>1</label>
        <note>catalytic</note>
    </ligand>
</feature>
<feature type="binding site" evidence="1">
    <location>
        <position position="212"/>
    </location>
    <ligand>
        <name>Zn(2+)</name>
        <dbReference type="ChEBI" id="CHEBI:29105"/>
        <label>2</label>
        <note>catalytic</note>
    </ligand>
</feature>
<feature type="binding site" evidence="1">
    <location>
        <position position="270"/>
    </location>
    <ligand>
        <name>Zn(2+)</name>
        <dbReference type="ChEBI" id="CHEBI:29105"/>
        <label>2</label>
        <note>catalytic</note>
    </ligand>
</feature>
<proteinExistence type="inferred from homology"/>
<gene>
    <name evidence="1" type="primary">rnz</name>
    <name type="ordered locus">BCAH187_A4274</name>
</gene>
<evidence type="ECO:0000255" key="1">
    <source>
        <dbReference type="HAMAP-Rule" id="MF_01818"/>
    </source>
</evidence>
<name>RNZ_BACC7</name>
<accession>B7HNQ7</accession>
<protein>
    <recommendedName>
        <fullName evidence="1">Ribonuclease Z</fullName>
        <shortName evidence="1">RNase Z</shortName>
        <ecNumber evidence="1">3.1.26.11</ecNumber>
    </recommendedName>
    <alternativeName>
        <fullName evidence="1">tRNA 3 endonuclease</fullName>
    </alternativeName>
    <alternativeName>
        <fullName evidence="1">tRNase Z</fullName>
    </alternativeName>
</protein>
<reference key="1">
    <citation type="submission" date="2008-10" db="EMBL/GenBank/DDBJ databases">
        <title>Genome sequence of Bacillus cereus AH187.</title>
        <authorList>
            <person name="Dodson R.J."/>
            <person name="Durkin A.S."/>
            <person name="Rosovitz M.J."/>
            <person name="Rasko D.A."/>
            <person name="Kolsto A.B."/>
            <person name="Okstad O.A."/>
            <person name="Ravel J."/>
            <person name="Sutton G."/>
        </authorList>
    </citation>
    <scope>NUCLEOTIDE SEQUENCE [LARGE SCALE GENOMIC DNA]</scope>
    <source>
        <strain>AH187</strain>
    </source>
</reference>
<sequence>MEFVFLGTGAGVPSKGRNVSAIALQLLEERGQTWLFDCGEATQHQILHTSVRPRRIEKIFITHLHGDHIFGLPGLLGSRSFQGGTTPLTVYGPKGIKQFIEVALSVSTTHVKYPLEIVEITEEGTVFEDNEFHVETKRLSHGIECFGYRIIEKDIQGALLVDKLLEMGVKPGPLFKRLKDGEVVELENGTILNGQDFIGPPQKGRIITILGDTRFCEASRELAQDADVLVHEATFAAEDEQQAYDYFHSTSKQAASIALQANAKRLILTHISSRYQGDTYKELLKEARELFSNTEIATDLKSFPVER</sequence>
<dbReference type="EC" id="3.1.26.11" evidence="1"/>
<dbReference type="EMBL" id="CP001177">
    <property type="protein sequence ID" value="ACJ79366.1"/>
    <property type="molecule type" value="Genomic_DNA"/>
</dbReference>
<dbReference type="SMR" id="B7HNQ7"/>
<dbReference type="KEGG" id="bcr:BCAH187_A4274"/>
<dbReference type="HOGENOM" id="CLU_031317_2_0_9"/>
<dbReference type="Proteomes" id="UP000002214">
    <property type="component" value="Chromosome"/>
</dbReference>
<dbReference type="GO" id="GO:0042781">
    <property type="term" value="F:3'-tRNA processing endoribonuclease activity"/>
    <property type="evidence" value="ECO:0007669"/>
    <property type="project" value="UniProtKB-UniRule"/>
</dbReference>
<dbReference type="GO" id="GO:0008270">
    <property type="term" value="F:zinc ion binding"/>
    <property type="evidence" value="ECO:0007669"/>
    <property type="project" value="UniProtKB-UniRule"/>
</dbReference>
<dbReference type="CDD" id="cd07717">
    <property type="entry name" value="RNaseZ_ZiPD-like_MBL-fold"/>
    <property type="match status" value="1"/>
</dbReference>
<dbReference type="FunFam" id="3.60.15.10:FF:000002">
    <property type="entry name" value="Ribonuclease Z"/>
    <property type="match status" value="1"/>
</dbReference>
<dbReference type="Gene3D" id="3.60.15.10">
    <property type="entry name" value="Ribonuclease Z/Hydroxyacylglutathione hydrolase-like"/>
    <property type="match status" value="1"/>
</dbReference>
<dbReference type="HAMAP" id="MF_01818">
    <property type="entry name" value="RNase_Z_BN"/>
    <property type="match status" value="1"/>
</dbReference>
<dbReference type="InterPro" id="IPR001279">
    <property type="entry name" value="Metallo-B-lactamas"/>
</dbReference>
<dbReference type="InterPro" id="IPR036866">
    <property type="entry name" value="RibonucZ/Hydroxyglut_hydro"/>
</dbReference>
<dbReference type="InterPro" id="IPR013471">
    <property type="entry name" value="RNase_Z/BN"/>
</dbReference>
<dbReference type="NCBIfam" id="NF000800">
    <property type="entry name" value="PRK00055.1-1"/>
    <property type="match status" value="1"/>
</dbReference>
<dbReference type="NCBIfam" id="NF000801">
    <property type="entry name" value="PRK00055.1-3"/>
    <property type="match status" value="1"/>
</dbReference>
<dbReference type="NCBIfam" id="TIGR02651">
    <property type="entry name" value="RNase_Z"/>
    <property type="match status" value="1"/>
</dbReference>
<dbReference type="PANTHER" id="PTHR46018">
    <property type="entry name" value="ZINC PHOSPHODIESTERASE ELAC PROTEIN 1"/>
    <property type="match status" value="1"/>
</dbReference>
<dbReference type="PANTHER" id="PTHR46018:SF2">
    <property type="entry name" value="ZINC PHOSPHODIESTERASE ELAC PROTEIN 1"/>
    <property type="match status" value="1"/>
</dbReference>
<dbReference type="Pfam" id="PF00753">
    <property type="entry name" value="Lactamase_B"/>
    <property type="match status" value="1"/>
</dbReference>
<dbReference type="Pfam" id="PF12706">
    <property type="entry name" value="Lactamase_B_2"/>
    <property type="match status" value="1"/>
</dbReference>
<dbReference type="SMART" id="SM00849">
    <property type="entry name" value="Lactamase_B"/>
    <property type="match status" value="1"/>
</dbReference>
<dbReference type="SUPFAM" id="SSF56281">
    <property type="entry name" value="Metallo-hydrolase/oxidoreductase"/>
    <property type="match status" value="1"/>
</dbReference>
<comment type="function">
    <text evidence="1">Zinc phosphodiesterase, which displays some tRNA 3'-processing endonuclease activity. Probably involved in tRNA maturation, by removing a 3'-trailer from precursor tRNA.</text>
</comment>
<comment type="catalytic activity">
    <reaction evidence="1">
        <text>Endonucleolytic cleavage of RNA, removing extra 3' nucleotides from tRNA precursor, generating 3' termini of tRNAs. A 3'-hydroxy group is left at the tRNA terminus and a 5'-phosphoryl group is left at the trailer molecule.</text>
        <dbReference type="EC" id="3.1.26.11"/>
    </reaction>
</comment>
<comment type="cofactor">
    <cofactor evidence="1">
        <name>Zn(2+)</name>
        <dbReference type="ChEBI" id="CHEBI:29105"/>
    </cofactor>
    <text evidence="1">Binds 2 Zn(2+) ions.</text>
</comment>
<comment type="subunit">
    <text evidence="1">Homodimer.</text>
</comment>
<comment type="similarity">
    <text evidence="1">Belongs to the RNase Z family.</text>
</comment>
<organism>
    <name type="scientific">Bacillus cereus (strain AH187)</name>
    <dbReference type="NCBI Taxonomy" id="405534"/>
    <lineage>
        <taxon>Bacteria</taxon>
        <taxon>Bacillati</taxon>
        <taxon>Bacillota</taxon>
        <taxon>Bacilli</taxon>
        <taxon>Bacillales</taxon>
        <taxon>Bacillaceae</taxon>
        <taxon>Bacillus</taxon>
        <taxon>Bacillus cereus group</taxon>
    </lineage>
</organism>
<keyword id="KW-0255">Endonuclease</keyword>
<keyword id="KW-0378">Hydrolase</keyword>
<keyword id="KW-0479">Metal-binding</keyword>
<keyword id="KW-0540">Nuclease</keyword>
<keyword id="KW-0819">tRNA processing</keyword>
<keyword id="KW-0862">Zinc</keyword>